<protein>
    <recommendedName>
        <fullName evidence="5">Ribonuclease III domain-containing protein RNC1, chloroplastic</fullName>
    </recommendedName>
    <alternativeName>
        <fullName evidence="5">Chloroplast ribonuclease III domain protein</fullName>
    </alternativeName>
</protein>
<proteinExistence type="evidence at transcript level"/>
<organism evidence="9">
    <name type="scientific">Oryza sativa subsp. japonica</name>
    <name type="common">Rice</name>
    <dbReference type="NCBI Taxonomy" id="39947"/>
    <lineage>
        <taxon>Eukaryota</taxon>
        <taxon>Viridiplantae</taxon>
        <taxon>Streptophyta</taxon>
        <taxon>Embryophyta</taxon>
        <taxon>Tracheophyta</taxon>
        <taxon>Spermatophyta</taxon>
        <taxon>Magnoliopsida</taxon>
        <taxon>Liliopsida</taxon>
        <taxon>Poales</taxon>
        <taxon>Poaceae</taxon>
        <taxon>BOP clade</taxon>
        <taxon>Oryzoideae</taxon>
        <taxon>Oryzeae</taxon>
        <taxon>Oryzinae</taxon>
        <taxon>Oryza</taxon>
        <taxon>Oryza sativa</taxon>
    </lineage>
</organism>
<gene>
    <name evidence="5" type="primary">RNC1</name>
    <name evidence="7" type="ordered locus">Os01g0810100</name>
    <name evidence="8" type="ORF">OSNPB_010810100</name>
    <name evidence="6" type="ORF">P0468B07.33</name>
</gene>
<reference key="1">
    <citation type="journal article" date="2002" name="Nature">
        <title>The genome sequence and structure of rice chromosome 1.</title>
        <authorList>
            <person name="Sasaki T."/>
            <person name="Matsumoto T."/>
            <person name="Yamamoto K."/>
            <person name="Sakata K."/>
            <person name="Baba T."/>
            <person name="Katayose Y."/>
            <person name="Wu J."/>
            <person name="Niimura Y."/>
            <person name="Cheng Z."/>
            <person name="Nagamura Y."/>
            <person name="Antonio B.A."/>
            <person name="Kanamori H."/>
            <person name="Hosokawa S."/>
            <person name="Masukawa M."/>
            <person name="Arikawa K."/>
            <person name="Chiden Y."/>
            <person name="Hayashi M."/>
            <person name="Okamoto M."/>
            <person name="Ando T."/>
            <person name="Aoki H."/>
            <person name="Arita K."/>
            <person name="Hamada M."/>
            <person name="Harada C."/>
            <person name="Hijishita S."/>
            <person name="Honda M."/>
            <person name="Ichikawa Y."/>
            <person name="Idonuma A."/>
            <person name="Iijima M."/>
            <person name="Ikeda M."/>
            <person name="Ikeno M."/>
            <person name="Ito S."/>
            <person name="Ito T."/>
            <person name="Ito Y."/>
            <person name="Ito Y."/>
            <person name="Iwabuchi A."/>
            <person name="Kamiya K."/>
            <person name="Karasawa W."/>
            <person name="Katagiri S."/>
            <person name="Kikuta A."/>
            <person name="Kobayashi N."/>
            <person name="Kono I."/>
            <person name="Machita K."/>
            <person name="Maehara T."/>
            <person name="Mizuno H."/>
            <person name="Mizubayashi T."/>
            <person name="Mukai Y."/>
            <person name="Nagasaki H."/>
            <person name="Nakashima M."/>
            <person name="Nakama Y."/>
            <person name="Nakamichi Y."/>
            <person name="Nakamura M."/>
            <person name="Namiki N."/>
            <person name="Negishi M."/>
            <person name="Ohta I."/>
            <person name="Ono N."/>
            <person name="Saji S."/>
            <person name="Sakai K."/>
            <person name="Shibata M."/>
            <person name="Shimokawa T."/>
            <person name="Shomura A."/>
            <person name="Song J."/>
            <person name="Takazaki Y."/>
            <person name="Terasawa K."/>
            <person name="Tsuji K."/>
            <person name="Waki K."/>
            <person name="Yamagata H."/>
            <person name="Yamane H."/>
            <person name="Yoshiki S."/>
            <person name="Yoshihara R."/>
            <person name="Yukawa K."/>
            <person name="Zhong H."/>
            <person name="Iwama H."/>
            <person name="Endo T."/>
            <person name="Ito H."/>
            <person name="Hahn J.H."/>
            <person name="Kim H.-I."/>
            <person name="Eun M.-Y."/>
            <person name="Yano M."/>
            <person name="Jiang J."/>
            <person name="Gojobori T."/>
        </authorList>
    </citation>
    <scope>NUCLEOTIDE SEQUENCE [LARGE SCALE GENOMIC DNA]</scope>
    <source>
        <strain>cv. Nipponbare</strain>
    </source>
</reference>
<reference key="2">
    <citation type="journal article" date="2005" name="Nature">
        <title>The map-based sequence of the rice genome.</title>
        <authorList>
            <consortium name="International rice genome sequencing project (IRGSP)"/>
        </authorList>
    </citation>
    <scope>NUCLEOTIDE SEQUENCE [LARGE SCALE GENOMIC DNA]</scope>
    <source>
        <strain>cv. Nipponbare</strain>
    </source>
</reference>
<reference key="3">
    <citation type="journal article" date="2008" name="Nucleic Acids Res.">
        <title>The rice annotation project database (RAP-DB): 2008 update.</title>
        <authorList>
            <consortium name="The rice annotation project (RAP)"/>
        </authorList>
    </citation>
    <scope>GENOME REANNOTATION</scope>
    <source>
        <strain>cv. Nipponbare</strain>
    </source>
</reference>
<reference key="4">
    <citation type="journal article" date="2013" name="Rice">
        <title>Improvement of the Oryza sativa Nipponbare reference genome using next generation sequence and optical map data.</title>
        <authorList>
            <person name="Kawahara Y."/>
            <person name="de la Bastide M."/>
            <person name="Hamilton J.P."/>
            <person name="Kanamori H."/>
            <person name="McCombie W.R."/>
            <person name="Ouyang S."/>
            <person name="Schwartz D.C."/>
            <person name="Tanaka T."/>
            <person name="Wu J."/>
            <person name="Zhou S."/>
            <person name="Childs K.L."/>
            <person name="Davidson R.M."/>
            <person name="Lin H."/>
            <person name="Quesada-Ocampo L."/>
            <person name="Vaillancourt B."/>
            <person name="Sakai H."/>
            <person name="Lee S.S."/>
            <person name="Kim J."/>
            <person name="Numa H."/>
            <person name="Itoh T."/>
            <person name="Buell C.R."/>
            <person name="Matsumoto T."/>
        </authorList>
    </citation>
    <scope>GENOME REANNOTATION</scope>
    <source>
        <strain>cv. Nipponbare</strain>
    </source>
</reference>
<reference key="5">
    <citation type="journal article" date="2003" name="Science">
        <title>Collection, mapping, and annotation of over 28,000 cDNA clones from japonica rice.</title>
        <authorList>
            <consortium name="The rice full-length cDNA consortium"/>
        </authorList>
    </citation>
    <scope>NUCLEOTIDE SEQUENCE [LARGE SCALE MRNA]</scope>
    <source>
        <strain>cv. Nipponbare</strain>
    </source>
</reference>
<dbReference type="EMBL" id="AP003260">
    <property type="protein sequence ID" value="BAB89639.1"/>
    <property type="molecule type" value="Genomic_DNA"/>
</dbReference>
<dbReference type="EMBL" id="AP008207">
    <property type="protein sequence ID" value="BAF06495.1"/>
    <property type="molecule type" value="Genomic_DNA"/>
</dbReference>
<dbReference type="EMBL" id="AP014957">
    <property type="protein sequence ID" value="BAS74865.1"/>
    <property type="molecule type" value="Genomic_DNA"/>
</dbReference>
<dbReference type="EMBL" id="AK071916">
    <property type="protein sequence ID" value="BAG92754.1"/>
    <property type="molecule type" value="mRNA"/>
</dbReference>
<dbReference type="EMBL" id="AK099056">
    <property type="protein sequence ID" value="BAG93898.1"/>
    <property type="molecule type" value="mRNA"/>
</dbReference>
<dbReference type="RefSeq" id="XP_015648830.1">
    <property type="nucleotide sequence ID" value="XM_015793344.1"/>
</dbReference>
<dbReference type="FunCoup" id="Q8S1Z0">
    <property type="interactions" value="2845"/>
</dbReference>
<dbReference type="STRING" id="39947.Q8S1Z0"/>
<dbReference type="PaxDb" id="39947-Q8S1Z0"/>
<dbReference type="EnsemblPlants" id="Os01t0810100-01">
    <property type="protein sequence ID" value="Os01t0810100-01"/>
    <property type="gene ID" value="Os01g0810100"/>
</dbReference>
<dbReference type="EnsemblPlants" id="Os01t0810100-02">
    <property type="protein sequence ID" value="Os01t0810100-02"/>
    <property type="gene ID" value="Os01g0810100"/>
</dbReference>
<dbReference type="Gramene" id="Os01t0810100-01">
    <property type="protein sequence ID" value="Os01t0810100-01"/>
    <property type="gene ID" value="Os01g0810100"/>
</dbReference>
<dbReference type="Gramene" id="Os01t0810100-02">
    <property type="protein sequence ID" value="Os01t0810100-02"/>
    <property type="gene ID" value="Os01g0810100"/>
</dbReference>
<dbReference type="KEGG" id="dosa:Os01g0810100"/>
<dbReference type="eggNOG" id="ENOG502QSFE">
    <property type="taxonomic scope" value="Eukaryota"/>
</dbReference>
<dbReference type="HOGENOM" id="CLU_018164_0_0_1"/>
<dbReference type="InParanoid" id="Q8S1Z0"/>
<dbReference type="OMA" id="LHHYVIY"/>
<dbReference type="OrthoDB" id="1897625at2759"/>
<dbReference type="Proteomes" id="UP000000763">
    <property type="component" value="Chromosome 1"/>
</dbReference>
<dbReference type="Proteomes" id="UP000059680">
    <property type="component" value="Chromosome 1"/>
</dbReference>
<dbReference type="GO" id="GO:0009507">
    <property type="term" value="C:chloroplast"/>
    <property type="evidence" value="ECO:0007669"/>
    <property type="project" value="UniProtKB-SubCell"/>
</dbReference>
<dbReference type="GO" id="GO:0005634">
    <property type="term" value="C:nucleus"/>
    <property type="evidence" value="ECO:0000318"/>
    <property type="project" value="GO_Central"/>
</dbReference>
<dbReference type="GO" id="GO:1990904">
    <property type="term" value="C:ribonucleoprotein complex"/>
    <property type="evidence" value="ECO:0007669"/>
    <property type="project" value="UniProtKB-KW"/>
</dbReference>
<dbReference type="GO" id="GO:0003725">
    <property type="term" value="F:double-stranded RNA binding"/>
    <property type="evidence" value="ECO:0000318"/>
    <property type="project" value="GO_Central"/>
</dbReference>
<dbReference type="GO" id="GO:0004525">
    <property type="term" value="F:ribonuclease III activity"/>
    <property type="evidence" value="ECO:0000318"/>
    <property type="project" value="GO_Central"/>
</dbReference>
<dbReference type="GO" id="GO:0006397">
    <property type="term" value="P:mRNA processing"/>
    <property type="evidence" value="ECO:0007669"/>
    <property type="project" value="UniProtKB-KW"/>
</dbReference>
<dbReference type="GO" id="GO:0010468">
    <property type="term" value="P:regulation of gene expression"/>
    <property type="evidence" value="ECO:0000318"/>
    <property type="project" value="GO_Central"/>
</dbReference>
<dbReference type="GO" id="GO:0006396">
    <property type="term" value="P:RNA processing"/>
    <property type="evidence" value="ECO:0000318"/>
    <property type="project" value="GO_Central"/>
</dbReference>
<dbReference type="GO" id="GO:0008380">
    <property type="term" value="P:RNA splicing"/>
    <property type="evidence" value="ECO:0007669"/>
    <property type="project" value="UniProtKB-KW"/>
</dbReference>
<dbReference type="CDD" id="cd00593">
    <property type="entry name" value="RIBOc"/>
    <property type="match status" value="1"/>
</dbReference>
<dbReference type="FunFam" id="1.10.1520.10:FF:000009">
    <property type="entry name" value="Ribonuclease III domain-containing protein RNC1, chloroplastic"/>
    <property type="match status" value="1"/>
</dbReference>
<dbReference type="FunFam" id="1.10.1520.10:FF:000011">
    <property type="entry name" value="Ribonuclease III domain-containing protein RNC1, chloroplastic"/>
    <property type="match status" value="1"/>
</dbReference>
<dbReference type="Gene3D" id="1.10.1520.10">
    <property type="entry name" value="Ribonuclease III domain"/>
    <property type="match status" value="2"/>
</dbReference>
<dbReference type="InterPro" id="IPR000999">
    <property type="entry name" value="RNase_III_dom"/>
</dbReference>
<dbReference type="InterPro" id="IPR036389">
    <property type="entry name" value="RNase_III_sf"/>
</dbReference>
<dbReference type="PANTHER" id="PTHR11207">
    <property type="entry name" value="RIBONUCLEASE III"/>
    <property type="match status" value="1"/>
</dbReference>
<dbReference type="PANTHER" id="PTHR11207:SF34">
    <property type="entry name" value="RIBONUCLEASE III DOMAIN-CONTAINING PROTEIN RNC1, CHLOROPLASTIC"/>
    <property type="match status" value="1"/>
</dbReference>
<dbReference type="Pfam" id="PF00636">
    <property type="entry name" value="Ribonuclease_3"/>
    <property type="match status" value="1"/>
</dbReference>
<dbReference type="SMART" id="SM00535">
    <property type="entry name" value="RIBOc"/>
    <property type="match status" value="1"/>
</dbReference>
<dbReference type="SUPFAM" id="SSF69065">
    <property type="entry name" value="RNase III domain-like"/>
    <property type="match status" value="2"/>
</dbReference>
<dbReference type="PROSITE" id="PS50142">
    <property type="entry name" value="RNASE_3_2"/>
    <property type="match status" value="1"/>
</dbReference>
<keyword id="KW-0150">Chloroplast</keyword>
<keyword id="KW-0507">mRNA processing</keyword>
<keyword id="KW-0508">mRNA splicing</keyword>
<keyword id="KW-0934">Plastid</keyword>
<keyword id="KW-1185">Reference proteome</keyword>
<keyword id="KW-0677">Repeat</keyword>
<keyword id="KW-0687">Ribonucleoprotein</keyword>
<keyword id="KW-0694">RNA-binding</keyword>
<keyword id="KW-0809">Transit peptide</keyword>
<accession>Q8S1Z0</accession>
<sequence>MAPPAMAFQALALGPLPLPLPAARRRRRVRVLAVAADHTPPPPPSPSSPPEPANSPSRLLRELAERKKAVSPKKKHPPRRFILKPPLDDERLTQRFLSSPQLSLKALPLLSSCLPSAPLSAADRTWMDEYLLEAKQALGYPLAPSETLGDGDDDGCPARHFDVLLYLAFQHLDTSCERTRTRHVRSGHSRLWFLGQYVLELAFCEFFLQRYPRESPGPMRERVFALIGKRAIPKWIKAASLHNLVFPYDDLDKMIRKDREPPAKAVFWALFGAIYLCFGMPEVYRVLFEAFGMDPEDESCQPKLRRQLEDVDYVSVEFEKRQLTWQDVAAYRPPPDALFAHPRLFRACVPPGMHRFRGNIWDFDNRPKVMNTLGYPLPMNDRIPEITEARNIELGLGLQLCFLHPSKHKFEHPRFCLERLEYVGQKIQDLVMAERLLMKHLDAPGRWLAEKHRRLLMNKYCGRYLRDKHLHHYIIYGESVQDRFEHNRRLRNPSTTAVQQAIHGLAYCVYGKPDVRRLMFEVFDFEQVQPKAV</sequence>
<comment type="function">
    <text evidence="1">Binds specific group II introns in chloroplasts and facilitates their splicing. Acts on both subgroup IIA and subgroup IIB introns. The substrates of the subgroup II also require the CRM domain proteins CAF1 or CAF2. Binds both single-stranded and double-stranded RNA non-specifically, but lacks endonuclease activity. Required for plastid ribosome biogenesis.</text>
</comment>
<comment type="subunit">
    <text evidence="1">Interacts with RNA. Part of large ribonucleo-protein particles that contain CAF1 and/or CAF2.</text>
</comment>
<comment type="subcellular location">
    <subcellularLocation>
        <location evidence="2">Plastid</location>
        <location evidence="2">Chloroplast</location>
    </subcellularLocation>
</comment>
<name>RNC1_ORYSJ</name>
<evidence type="ECO:0000250" key="1">
    <source>
        <dbReference type="UniProtKB" id="A6YSL1"/>
    </source>
</evidence>
<evidence type="ECO:0000255" key="2"/>
<evidence type="ECO:0000255" key="3">
    <source>
        <dbReference type="PROSITE-ProRule" id="PRU00177"/>
    </source>
</evidence>
<evidence type="ECO:0000256" key="4">
    <source>
        <dbReference type="SAM" id="MobiDB-lite"/>
    </source>
</evidence>
<evidence type="ECO:0000305" key="5"/>
<evidence type="ECO:0000312" key="6">
    <source>
        <dbReference type="EMBL" id="BAB89639.1"/>
    </source>
</evidence>
<evidence type="ECO:0000312" key="7">
    <source>
        <dbReference type="EMBL" id="BAF06495.1"/>
    </source>
</evidence>
<evidence type="ECO:0000312" key="8">
    <source>
        <dbReference type="EMBL" id="BAS74865.1"/>
    </source>
</evidence>
<evidence type="ECO:0000312" key="9">
    <source>
        <dbReference type="Proteomes" id="UP000059680"/>
    </source>
</evidence>
<feature type="transit peptide" description="Chloroplast" evidence="2">
    <location>
        <begin position="1"/>
        <end position="30"/>
    </location>
</feature>
<feature type="chain" id="PRO_0000435538" description="Ribonuclease III domain-containing protein RNC1, chloroplastic">
    <location>
        <begin position="31"/>
        <end position="533"/>
    </location>
</feature>
<feature type="domain" description="RNase III 1" evidence="3">
    <location>
        <begin position="164"/>
        <end position="279"/>
    </location>
</feature>
<feature type="domain" description="RNase III 2" evidence="3">
    <location>
        <begin position="411"/>
        <end position="511"/>
    </location>
</feature>
<feature type="region of interest" description="Disordered" evidence="4">
    <location>
        <begin position="31"/>
        <end position="57"/>
    </location>
</feature>
<feature type="region of interest" description="Disordered" evidence="4">
    <location>
        <begin position="66"/>
        <end position="85"/>
    </location>
</feature>
<feature type="compositionally biased region" description="Pro residues" evidence="4">
    <location>
        <begin position="39"/>
        <end position="53"/>
    </location>
</feature>
<feature type="compositionally biased region" description="Basic residues" evidence="4">
    <location>
        <begin position="69"/>
        <end position="82"/>
    </location>
</feature>